<keyword id="KW-0067">ATP-binding</keyword>
<keyword id="KW-0418">Kinase</keyword>
<keyword id="KW-0547">Nucleotide-binding</keyword>
<keyword id="KW-1185">Reference proteome</keyword>
<keyword id="KW-0808">Transferase</keyword>
<reference key="1">
    <citation type="journal article" date="1999" name="Genetics">
        <title>Divergence of the hyperthermophilic archaea Pyrococcus furiosus and P. horikoshii inferred from complete genomic sequences.</title>
        <authorList>
            <person name="Maeder D.L."/>
            <person name="Weiss R.B."/>
            <person name="Dunn D.M."/>
            <person name="Cherry J.L."/>
            <person name="Gonzalez J.M."/>
            <person name="DiRuggiero J."/>
            <person name="Robb F.T."/>
        </authorList>
    </citation>
    <scope>NUCLEOTIDE SEQUENCE [LARGE SCALE GENOMIC DNA]</scope>
    <source>
        <strain>ATCC 43587 / DSM 3638 / JCM 8422 / Vc1</strain>
    </source>
</reference>
<name>PRNK_PYRFU</name>
<proteinExistence type="inferred from homology"/>
<sequence>MEVNKASLTYDVPEDREYATKRILSLKRPSKIMVIGDVDTGKTTLIVYLANELISRGFKVAIVDADVGQKGILPPATISLALADMKFSSLSELKPLIHYFVGSITPSQFFGEMIVGTMRLSEIGKKFADYVLIDTTGMIYGSGVELKRLKIEAVKPDLILALEKKEELNPIVSGFEDKTIKLKVSENARSYSRSERRQIRQEKWRKYFENAKIVSFSLENVVVTGTSLFQGSDIREEEKSLLERLFKWVILHGRRIGDKYFVVKADVAEVPRVVDKNVVRYFDFEKLSNLLVGLLNEEGLCLGVGIIKGINFGEKRIDILTPVSEIENVREIRFGRIRVREDGEELGILDREAL</sequence>
<accession>Q8U4H6</accession>
<comment type="function">
    <text evidence="1">Polynucleotide kinase that can phosphorylate the 5'-hydroxyl groups of both single-stranded RNA (ssRNA) and single-stranded DNA (ssDNA). Exhibits a strong preference for ssRNA (By similarity).</text>
</comment>
<comment type="catalytic activity">
    <reaction>
        <text>a 5'-end dephospho-2'-deoxyribonucleoside-DNA + ATP = a 5'-end 5'-phospho-2'-deoxyribonucleoside-DNA + ADP + H(+)</text>
        <dbReference type="Rhea" id="RHEA:15669"/>
        <dbReference type="Rhea" id="RHEA-COMP:13180"/>
        <dbReference type="Rhea" id="RHEA-COMP:13184"/>
        <dbReference type="ChEBI" id="CHEBI:15378"/>
        <dbReference type="ChEBI" id="CHEBI:30616"/>
        <dbReference type="ChEBI" id="CHEBI:136412"/>
        <dbReference type="ChEBI" id="CHEBI:136416"/>
        <dbReference type="ChEBI" id="CHEBI:456216"/>
        <dbReference type="EC" id="2.7.1.78"/>
    </reaction>
</comment>
<comment type="catalytic activity">
    <reaction>
        <text>a 5'-end dephospho-ribonucleoside-RNA + ATP = a 5'-end 5'-phospho-ribonucleoside-RNA + ADP + H(+)</text>
        <dbReference type="Rhea" id="RHEA:54580"/>
        <dbReference type="Rhea" id="RHEA-COMP:13936"/>
        <dbReference type="Rhea" id="RHEA-COMP:15179"/>
        <dbReference type="ChEBI" id="CHEBI:15378"/>
        <dbReference type="ChEBI" id="CHEBI:30616"/>
        <dbReference type="ChEBI" id="CHEBI:138282"/>
        <dbReference type="ChEBI" id="CHEBI:138284"/>
        <dbReference type="ChEBI" id="CHEBI:456216"/>
        <dbReference type="EC" id="2.7.1.78"/>
    </reaction>
</comment>
<comment type="cofactor">
    <cofactor evidence="1">
        <name>a divalent metal cation</name>
        <dbReference type="ChEBI" id="CHEBI:60240"/>
    </cofactor>
</comment>
<evidence type="ECO:0000250" key="1"/>
<evidence type="ECO:0000255" key="2"/>
<dbReference type="EC" id="2.7.1.78"/>
<dbReference type="EMBL" id="AE009950">
    <property type="protein sequence ID" value="AAL80236.1"/>
    <property type="molecule type" value="Genomic_DNA"/>
</dbReference>
<dbReference type="RefSeq" id="WP_011011224.1">
    <property type="nucleotide sequence ID" value="NZ_CP023154.1"/>
</dbReference>
<dbReference type="SMR" id="Q8U4H6"/>
<dbReference type="STRING" id="186497.PF0112"/>
<dbReference type="PaxDb" id="186497-PF0112"/>
<dbReference type="DNASU" id="1467941"/>
<dbReference type="KEGG" id="pfu:PF0112"/>
<dbReference type="PATRIC" id="fig|186497.12.peg.116"/>
<dbReference type="eggNOG" id="arCOG04127">
    <property type="taxonomic scope" value="Archaea"/>
</dbReference>
<dbReference type="HOGENOM" id="CLU_051301_0_1_2"/>
<dbReference type="OrthoDB" id="359472at2157"/>
<dbReference type="PhylomeDB" id="Q8U4H6"/>
<dbReference type="Proteomes" id="UP000001013">
    <property type="component" value="Chromosome"/>
</dbReference>
<dbReference type="GO" id="GO:0005524">
    <property type="term" value="F:ATP binding"/>
    <property type="evidence" value="ECO:0007669"/>
    <property type="project" value="UniProtKB-KW"/>
</dbReference>
<dbReference type="GO" id="GO:0046404">
    <property type="term" value="F:ATP-dependent polydeoxyribonucleotide 5'-hydroxyl-kinase activity"/>
    <property type="evidence" value="ECO:0007669"/>
    <property type="project" value="RHEA"/>
</dbReference>
<dbReference type="GO" id="GO:0051736">
    <property type="term" value="F:ATP-dependent polyribonucleotide 5'-hydroxyl-kinase activity"/>
    <property type="evidence" value="ECO:0007669"/>
    <property type="project" value="RHEA"/>
</dbReference>
<dbReference type="GO" id="GO:0006396">
    <property type="term" value="P:RNA processing"/>
    <property type="evidence" value="ECO:0007669"/>
    <property type="project" value="InterPro"/>
</dbReference>
<dbReference type="Gene3D" id="3.40.50.300">
    <property type="entry name" value="P-loop containing nucleotide triphosphate hydrolases"/>
    <property type="match status" value="1"/>
</dbReference>
<dbReference type="InterPro" id="IPR045116">
    <property type="entry name" value="Clp1/Grc3"/>
</dbReference>
<dbReference type="InterPro" id="IPR032319">
    <property type="entry name" value="CLP1_P"/>
</dbReference>
<dbReference type="InterPro" id="IPR027417">
    <property type="entry name" value="P-loop_NTPase"/>
</dbReference>
<dbReference type="PANTHER" id="PTHR12755">
    <property type="entry name" value="CLEAVAGE/POLYADENYLATION FACTOR IA SUBUNIT CLP1P"/>
    <property type="match status" value="1"/>
</dbReference>
<dbReference type="PANTHER" id="PTHR12755:SF3">
    <property type="entry name" value="POLYNUCLEOTIDE 5'-HYDROXYL-KINASE NOL9"/>
    <property type="match status" value="1"/>
</dbReference>
<dbReference type="Pfam" id="PF16575">
    <property type="entry name" value="CLP1_P"/>
    <property type="match status" value="1"/>
</dbReference>
<dbReference type="SUPFAM" id="SSF52540">
    <property type="entry name" value="P-loop containing nucleoside triphosphate hydrolases"/>
    <property type="match status" value="1"/>
</dbReference>
<feature type="chain" id="PRO_0000376016" description="Polyribonucleotide 5'-hydroxyl-kinase PF0112">
    <location>
        <begin position="1"/>
        <end position="354"/>
    </location>
</feature>
<feature type="binding site" evidence="2">
    <location>
        <begin position="36"/>
        <end position="43"/>
    </location>
    <ligand>
        <name>ATP</name>
        <dbReference type="ChEBI" id="CHEBI:30616"/>
    </ligand>
</feature>
<gene>
    <name type="ordered locus">PF0112</name>
</gene>
<organism>
    <name type="scientific">Pyrococcus furiosus (strain ATCC 43587 / DSM 3638 / JCM 8422 / Vc1)</name>
    <dbReference type="NCBI Taxonomy" id="186497"/>
    <lineage>
        <taxon>Archaea</taxon>
        <taxon>Methanobacteriati</taxon>
        <taxon>Methanobacteriota</taxon>
        <taxon>Thermococci</taxon>
        <taxon>Thermococcales</taxon>
        <taxon>Thermococcaceae</taxon>
        <taxon>Pyrococcus</taxon>
    </lineage>
</organism>
<protein>
    <recommendedName>
        <fullName>Polyribonucleotide 5'-hydroxyl-kinase PF0112</fullName>
        <ecNumber>2.7.1.78</ecNumber>
    </recommendedName>
    <alternativeName>
        <fullName>Polynucleotide kinase PF0112</fullName>
    </alternativeName>
</protein>